<comment type="function">
    <text evidence="1">Hydrolyzes ribosome-free peptidyl-tRNAs (with 1 or more amino acids incorporated), which drop off the ribosome during protein synthesis, or as a result of ribosome stalling.</text>
</comment>
<comment type="function">
    <text evidence="1">Catalyzes the release of premature peptidyl moieties from peptidyl-tRNA molecules trapped in stalled 50S ribosomal subunits, and thus maintains levels of free tRNAs and 50S ribosomes.</text>
</comment>
<comment type="catalytic activity">
    <reaction evidence="1">
        <text>an N-acyl-L-alpha-aminoacyl-tRNA + H2O = an N-acyl-L-amino acid + a tRNA + H(+)</text>
        <dbReference type="Rhea" id="RHEA:54448"/>
        <dbReference type="Rhea" id="RHEA-COMP:10123"/>
        <dbReference type="Rhea" id="RHEA-COMP:13883"/>
        <dbReference type="ChEBI" id="CHEBI:15377"/>
        <dbReference type="ChEBI" id="CHEBI:15378"/>
        <dbReference type="ChEBI" id="CHEBI:59874"/>
        <dbReference type="ChEBI" id="CHEBI:78442"/>
        <dbReference type="ChEBI" id="CHEBI:138191"/>
        <dbReference type="EC" id="3.1.1.29"/>
    </reaction>
</comment>
<comment type="subunit">
    <text evidence="1">Monomer.</text>
</comment>
<comment type="subcellular location">
    <subcellularLocation>
        <location evidence="1">Cytoplasm</location>
    </subcellularLocation>
</comment>
<comment type="similarity">
    <text evidence="1">Belongs to the PTH family.</text>
</comment>
<proteinExistence type="inferred from homology"/>
<dbReference type="EC" id="3.1.1.29" evidence="1"/>
<dbReference type="EMBL" id="CU633749">
    <property type="protein sequence ID" value="CAP62985.1"/>
    <property type="molecule type" value="Genomic_DNA"/>
</dbReference>
<dbReference type="RefSeq" id="WP_012351652.1">
    <property type="nucleotide sequence ID" value="NC_010528.1"/>
</dbReference>
<dbReference type="SMR" id="B2AGT6"/>
<dbReference type="GeneID" id="29762611"/>
<dbReference type="KEGG" id="cti:RALTA_A0315"/>
<dbReference type="eggNOG" id="COG0193">
    <property type="taxonomic scope" value="Bacteria"/>
</dbReference>
<dbReference type="HOGENOM" id="CLU_062456_3_1_4"/>
<dbReference type="BioCyc" id="CTAI977880:RALTA_RS01535-MONOMER"/>
<dbReference type="Proteomes" id="UP000001692">
    <property type="component" value="Chromosome 1"/>
</dbReference>
<dbReference type="GO" id="GO:0005737">
    <property type="term" value="C:cytoplasm"/>
    <property type="evidence" value="ECO:0007669"/>
    <property type="project" value="UniProtKB-SubCell"/>
</dbReference>
<dbReference type="GO" id="GO:0004045">
    <property type="term" value="F:peptidyl-tRNA hydrolase activity"/>
    <property type="evidence" value="ECO:0007669"/>
    <property type="project" value="UniProtKB-UniRule"/>
</dbReference>
<dbReference type="GO" id="GO:0000049">
    <property type="term" value="F:tRNA binding"/>
    <property type="evidence" value="ECO:0007669"/>
    <property type="project" value="UniProtKB-UniRule"/>
</dbReference>
<dbReference type="GO" id="GO:0006515">
    <property type="term" value="P:protein quality control for misfolded or incompletely synthesized proteins"/>
    <property type="evidence" value="ECO:0007669"/>
    <property type="project" value="UniProtKB-UniRule"/>
</dbReference>
<dbReference type="GO" id="GO:0072344">
    <property type="term" value="P:rescue of stalled ribosome"/>
    <property type="evidence" value="ECO:0007669"/>
    <property type="project" value="UniProtKB-UniRule"/>
</dbReference>
<dbReference type="CDD" id="cd00462">
    <property type="entry name" value="PTH"/>
    <property type="match status" value="1"/>
</dbReference>
<dbReference type="FunFam" id="3.40.50.1470:FF:000001">
    <property type="entry name" value="Peptidyl-tRNA hydrolase"/>
    <property type="match status" value="1"/>
</dbReference>
<dbReference type="Gene3D" id="3.40.50.1470">
    <property type="entry name" value="Peptidyl-tRNA hydrolase"/>
    <property type="match status" value="1"/>
</dbReference>
<dbReference type="HAMAP" id="MF_00083">
    <property type="entry name" value="Pept_tRNA_hydro_bact"/>
    <property type="match status" value="1"/>
</dbReference>
<dbReference type="InterPro" id="IPR001328">
    <property type="entry name" value="Pept_tRNA_hydro"/>
</dbReference>
<dbReference type="InterPro" id="IPR018171">
    <property type="entry name" value="Pept_tRNA_hydro_CS"/>
</dbReference>
<dbReference type="InterPro" id="IPR036416">
    <property type="entry name" value="Pept_tRNA_hydro_sf"/>
</dbReference>
<dbReference type="NCBIfam" id="TIGR00447">
    <property type="entry name" value="pth"/>
    <property type="match status" value="1"/>
</dbReference>
<dbReference type="PANTHER" id="PTHR17224">
    <property type="entry name" value="PEPTIDYL-TRNA HYDROLASE"/>
    <property type="match status" value="1"/>
</dbReference>
<dbReference type="PANTHER" id="PTHR17224:SF1">
    <property type="entry name" value="PEPTIDYL-TRNA HYDROLASE"/>
    <property type="match status" value="1"/>
</dbReference>
<dbReference type="Pfam" id="PF01195">
    <property type="entry name" value="Pept_tRNA_hydro"/>
    <property type="match status" value="1"/>
</dbReference>
<dbReference type="SUPFAM" id="SSF53178">
    <property type="entry name" value="Peptidyl-tRNA hydrolase-like"/>
    <property type="match status" value="1"/>
</dbReference>
<dbReference type="PROSITE" id="PS01195">
    <property type="entry name" value="PEPT_TRNA_HYDROL_1"/>
    <property type="match status" value="1"/>
</dbReference>
<dbReference type="PROSITE" id="PS01196">
    <property type="entry name" value="PEPT_TRNA_HYDROL_2"/>
    <property type="match status" value="1"/>
</dbReference>
<organism>
    <name type="scientific">Cupriavidus taiwanensis (strain DSM 17343 / BCRC 17206 / CCUG 44338 / CIP 107171 / LMG 19424 / R1)</name>
    <name type="common">Ralstonia taiwanensis (strain LMG 19424)</name>
    <dbReference type="NCBI Taxonomy" id="977880"/>
    <lineage>
        <taxon>Bacteria</taxon>
        <taxon>Pseudomonadati</taxon>
        <taxon>Pseudomonadota</taxon>
        <taxon>Betaproteobacteria</taxon>
        <taxon>Burkholderiales</taxon>
        <taxon>Burkholderiaceae</taxon>
        <taxon>Cupriavidus</taxon>
    </lineage>
</organism>
<name>PTH_CUPTR</name>
<gene>
    <name evidence="1" type="primary">pth</name>
    <name type="ordered locus">RALTA_A0315</name>
</gene>
<protein>
    <recommendedName>
        <fullName evidence="1">Peptidyl-tRNA hydrolase</fullName>
        <shortName evidence="1">Pth</shortName>
        <ecNumber evidence="1">3.1.1.29</ecNumber>
    </recommendedName>
</protein>
<reference key="1">
    <citation type="journal article" date="2008" name="Genome Res.">
        <title>Genome sequence of the beta-rhizobium Cupriavidus taiwanensis and comparative genomics of rhizobia.</title>
        <authorList>
            <person name="Amadou C."/>
            <person name="Pascal G."/>
            <person name="Mangenot S."/>
            <person name="Glew M."/>
            <person name="Bontemps C."/>
            <person name="Capela D."/>
            <person name="Carrere S."/>
            <person name="Cruveiller S."/>
            <person name="Dossat C."/>
            <person name="Lajus A."/>
            <person name="Marchetti M."/>
            <person name="Poinsot V."/>
            <person name="Rouy Z."/>
            <person name="Servin B."/>
            <person name="Saad M."/>
            <person name="Schenowitz C."/>
            <person name="Barbe V."/>
            <person name="Batut J."/>
            <person name="Medigue C."/>
            <person name="Masson-Boivin C."/>
        </authorList>
    </citation>
    <scope>NUCLEOTIDE SEQUENCE [LARGE SCALE GENOMIC DNA]</scope>
    <source>
        <strain>DSM 17343 / BCRC 17206 / CCUG 44338 / CIP 107171 / LMG 19424 / R1</strain>
    </source>
</reference>
<evidence type="ECO:0000255" key="1">
    <source>
        <dbReference type="HAMAP-Rule" id="MF_00083"/>
    </source>
</evidence>
<accession>B2AGT6</accession>
<feature type="chain" id="PRO_1000092934" description="Peptidyl-tRNA hydrolase">
    <location>
        <begin position="1"/>
        <end position="198"/>
    </location>
</feature>
<feature type="active site" description="Proton acceptor" evidence="1">
    <location>
        <position position="20"/>
    </location>
</feature>
<feature type="binding site" evidence="1">
    <location>
        <position position="15"/>
    </location>
    <ligand>
        <name>tRNA</name>
        <dbReference type="ChEBI" id="CHEBI:17843"/>
    </ligand>
</feature>
<feature type="binding site" evidence="1">
    <location>
        <position position="66"/>
    </location>
    <ligand>
        <name>tRNA</name>
        <dbReference type="ChEBI" id="CHEBI:17843"/>
    </ligand>
</feature>
<feature type="binding site" evidence="1">
    <location>
        <position position="68"/>
    </location>
    <ligand>
        <name>tRNA</name>
        <dbReference type="ChEBI" id="CHEBI:17843"/>
    </ligand>
</feature>
<feature type="binding site" evidence="1">
    <location>
        <position position="114"/>
    </location>
    <ligand>
        <name>tRNA</name>
        <dbReference type="ChEBI" id="CHEBI:17843"/>
    </ligand>
</feature>
<feature type="site" description="Discriminates between blocked and unblocked aminoacyl-tRNA" evidence="1">
    <location>
        <position position="10"/>
    </location>
</feature>
<feature type="site" description="Stabilizes the basic form of H active site to accept a proton" evidence="1">
    <location>
        <position position="93"/>
    </location>
</feature>
<sequence length="198" mass="21528">MIKLIVGLGNPGAEYEATRHNAGFWLVDQLARMGGATLRVEGRFHGLAARARLWDQEVWLLKPSTFMNRSGLAVVSLARFYKILPDEIVVVHDEMDLPAGSAKLKRGGGAGGHNGLKDISAHLGTQDYWRLRLGVGHPRNAPGGAGAGREDVVNFVLKPPRREEQEAIDAALDRCIEPLGLLARGDAERAMAQLHTAR</sequence>
<keyword id="KW-0963">Cytoplasm</keyword>
<keyword id="KW-0378">Hydrolase</keyword>
<keyword id="KW-0694">RNA-binding</keyword>
<keyword id="KW-0820">tRNA-binding</keyword>